<name>SFRP2_CANLF</name>
<organism>
    <name type="scientific">Canis lupus familiaris</name>
    <name type="common">Dog</name>
    <name type="synonym">Canis familiaris</name>
    <dbReference type="NCBI Taxonomy" id="9615"/>
    <lineage>
        <taxon>Eukaryota</taxon>
        <taxon>Metazoa</taxon>
        <taxon>Chordata</taxon>
        <taxon>Craniata</taxon>
        <taxon>Vertebrata</taxon>
        <taxon>Euteleostomi</taxon>
        <taxon>Mammalia</taxon>
        <taxon>Eutheria</taxon>
        <taxon>Laurasiatheria</taxon>
        <taxon>Carnivora</taxon>
        <taxon>Caniformia</taxon>
        <taxon>Canidae</taxon>
        <taxon>Canis</taxon>
    </lineage>
</organism>
<accession>Q863H1</accession>
<keyword id="KW-0217">Developmental protein</keyword>
<keyword id="KW-0221">Differentiation</keyword>
<keyword id="KW-1015">Disulfide bond</keyword>
<keyword id="KW-1185">Reference proteome</keyword>
<keyword id="KW-0964">Secreted</keyword>
<keyword id="KW-0732">Signal</keyword>
<keyword id="KW-0879">Wnt signaling pathway</keyword>
<comment type="function">
    <text>Soluble frizzled-related proteins (sFRPS) function as modulators of Wnt signaling through direct interaction with Wnts. They have a role in regulating cell growth and differentiation in specific cell types. SFRP2 may be important for eye retinal development and for myogenesis.</text>
</comment>
<comment type="subcellular location">
    <subcellularLocation>
        <location>Secreted</location>
    </subcellularLocation>
</comment>
<comment type="induction">
    <text>Up-regulated in mammary gland tumors.</text>
</comment>
<comment type="domain">
    <text evidence="1">The FZ domain is involved in binding with Wnt ligands.</text>
</comment>
<comment type="similarity">
    <text evidence="5">Belongs to the secreted frizzled-related protein (sFRP) family.</text>
</comment>
<gene>
    <name type="primary">SFRP2</name>
</gene>
<sequence>MPRGPGSLLLLVLASHCCLGSARGLFFGQPDFSYKRSNCKPIPANLQLCHGIEYQNMRLPNLLGHETMKEVLEQAGAWIPLVMKQCHPDTKKFLCSLFAPVCLDDLDETIQPCHSLCVQVKDRCAPVMSAFGFPWPDMLECDRFPQDNDLCIPLASSDHLLPATEEAPKVCEACKNKNEDDNDIMETLCKNDFALKIKVKEITYINRDTKIILETKSKTIYKLNGVSERDLKKSVLWLKDSLQCTCEEMNDINAPYLVMGQKLGGELVITSVKRWQKGQREFKRISRSIRKLQC</sequence>
<evidence type="ECO:0000250" key="1"/>
<evidence type="ECO:0000255" key="2"/>
<evidence type="ECO:0000255" key="3">
    <source>
        <dbReference type="PROSITE-ProRule" id="PRU00090"/>
    </source>
</evidence>
<evidence type="ECO:0000255" key="4">
    <source>
        <dbReference type="PROSITE-ProRule" id="PRU00295"/>
    </source>
</evidence>
<evidence type="ECO:0000305" key="5"/>
<dbReference type="EMBL" id="AJ560716">
    <property type="protein sequence ID" value="CAD90762.1"/>
    <property type="molecule type" value="mRNA"/>
</dbReference>
<dbReference type="RefSeq" id="NP_001002987.1">
    <property type="nucleotide sequence ID" value="NM_001002987.2"/>
</dbReference>
<dbReference type="SMR" id="Q863H1"/>
<dbReference type="CORUM" id="Q863H1"/>
<dbReference type="FunCoup" id="Q863H1">
    <property type="interactions" value="72"/>
</dbReference>
<dbReference type="STRING" id="9615.ENSCAFP00000012270"/>
<dbReference type="MEROPS" id="I93.002"/>
<dbReference type="PaxDb" id="9612-ENSCAFP00000012270"/>
<dbReference type="Ensembl" id="ENSCAFT00000013260.5">
    <property type="protein sequence ID" value="ENSCAFP00000012270.5"/>
    <property type="gene ID" value="ENSCAFG00000008353.5"/>
</dbReference>
<dbReference type="Ensembl" id="ENSCAFT00030016702.1">
    <property type="protein sequence ID" value="ENSCAFP00030014595.1"/>
    <property type="gene ID" value="ENSCAFG00030009035.1"/>
</dbReference>
<dbReference type="Ensembl" id="ENSCAFT00030016877.1">
    <property type="protein sequence ID" value="ENSCAFP00030014750.1"/>
    <property type="gene ID" value="ENSCAFG00030009035.1"/>
</dbReference>
<dbReference type="Ensembl" id="ENSCAFT00040022516.1">
    <property type="protein sequence ID" value="ENSCAFP00040019510.1"/>
    <property type="gene ID" value="ENSCAFG00040012203.1"/>
</dbReference>
<dbReference type="Ensembl" id="ENSCAFT00040022642.1">
    <property type="protein sequence ID" value="ENSCAFP00040019619.1"/>
    <property type="gene ID" value="ENSCAFG00040012203.1"/>
</dbReference>
<dbReference type="Ensembl" id="ENSCAFT00845016668.1">
    <property type="protein sequence ID" value="ENSCAFP00845012972.1"/>
    <property type="gene ID" value="ENSCAFG00845009450.1"/>
</dbReference>
<dbReference type="VEuPathDB" id="HostDB:ENSCAFG00845009450"/>
<dbReference type="VGNC" id="VGNC:46081">
    <property type="gene designation" value="SFRP2"/>
</dbReference>
<dbReference type="eggNOG" id="KOG3577">
    <property type="taxonomic scope" value="Eukaryota"/>
</dbReference>
<dbReference type="GeneTree" id="ENSGT00940000156432"/>
<dbReference type="InParanoid" id="Q863H1"/>
<dbReference type="OrthoDB" id="5985572at2759"/>
<dbReference type="Proteomes" id="UP000002254">
    <property type="component" value="Chromosome 15"/>
</dbReference>
<dbReference type="Proteomes" id="UP000694429">
    <property type="component" value="Chromosome 15"/>
</dbReference>
<dbReference type="Proteomes" id="UP000694542">
    <property type="component" value="Chromosome 15"/>
</dbReference>
<dbReference type="Proteomes" id="UP000805418">
    <property type="component" value="Chromosome 15"/>
</dbReference>
<dbReference type="GO" id="GO:0062023">
    <property type="term" value="C:collagen-containing extracellular matrix"/>
    <property type="evidence" value="ECO:0000314"/>
    <property type="project" value="BHF-UCL"/>
</dbReference>
<dbReference type="GO" id="GO:0005615">
    <property type="term" value="C:extracellular space"/>
    <property type="evidence" value="ECO:0000314"/>
    <property type="project" value="BHF-UCL"/>
</dbReference>
<dbReference type="GO" id="GO:0061133">
    <property type="term" value="F:endopeptidase activator activity"/>
    <property type="evidence" value="ECO:0007669"/>
    <property type="project" value="Ensembl"/>
</dbReference>
<dbReference type="GO" id="GO:0001968">
    <property type="term" value="F:fibronectin binding"/>
    <property type="evidence" value="ECO:0000353"/>
    <property type="project" value="BHF-UCL"/>
</dbReference>
<dbReference type="GO" id="GO:0005178">
    <property type="term" value="F:integrin binding"/>
    <property type="evidence" value="ECO:0000314"/>
    <property type="project" value="BHF-UCL"/>
</dbReference>
<dbReference type="GO" id="GO:0048018">
    <property type="term" value="F:receptor ligand activity"/>
    <property type="evidence" value="ECO:0007669"/>
    <property type="project" value="Ensembl"/>
</dbReference>
<dbReference type="GO" id="GO:0017147">
    <property type="term" value="F:Wnt-protein binding"/>
    <property type="evidence" value="ECO:0000318"/>
    <property type="project" value="GO_Central"/>
</dbReference>
<dbReference type="GO" id="GO:0030509">
    <property type="term" value="P:BMP signaling pathway"/>
    <property type="evidence" value="ECO:0007669"/>
    <property type="project" value="Ensembl"/>
</dbReference>
<dbReference type="GO" id="GO:0001569">
    <property type="term" value="P:branching involved in blood vessel morphogenesis"/>
    <property type="evidence" value="ECO:0007669"/>
    <property type="project" value="Ensembl"/>
</dbReference>
<dbReference type="GO" id="GO:0060070">
    <property type="term" value="P:canonical Wnt signaling pathway"/>
    <property type="evidence" value="ECO:0000318"/>
    <property type="project" value="GO_Central"/>
</dbReference>
<dbReference type="GO" id="GO:0003214">
    <property type="term" value="P:cardiac left ventricle morphogenesis"/>
    <property type="evidence" value="ECO:0007669"/>
    <property type="project" value="Ensembl"/>
</dbReference>
<dbReference type="GO" id="GO:0010659">
    <property type="term" value="P:cardiac muscle cell apoptotic process"/>
    <property type="evidence" value="ECO:0007669"/>
    <property type="project" value="Ensembl"/>
</dbReference>
<dbReference type="GO" id="GO:0007267">
    <property type="term" value="P:cell-cell signaling"/>
    <property type="evidence" value="ECO:0000314"/>
    <property type="project" value="BHF-UCL"/>
</dbReference>
<dbReference type="GO" id="GO:0071481">
    <property type="term" value="P:cellular response to X-ray"/>
    <property type="evidence" value="ECO:0007669"/>
    <property type="project" value="Ensembl"/>
</dbReference>
<dbReference type="GO" id="GO:0002063">
    <property type="term" value="P:chondrocyte development"/>
    <property type="evidence" value="ECO:0007669"/>
    <property type="project" value="Ensembl"/>
</dbReference>
<dbReference type="GO" id="GO:0030199">
    <property type="term" value="P:collagen fibril organization"/>
    <property type="evidence" value="ECO:0007669"/>
    <property type="project" value="Ensembl"/>
</dbReference>
<dbReference type="GO" id="GO:0060028">
    <property type="term" value="P:convergent extension involved in axis elongation"/>
    <property type="evidence" value="ECO:0007669"/>
    <property type="project" value="Ensembl"/>
</dbReference>
<dbReference type="GO" id="GO:0048546">
    <property type="term" value="P:digestive tract morphogenesis"/>
    <property type="evidence" value="ECO:0007669"/>
    <property type="project" value="Ensembl"/>
</dbReference>
<dbReference type="GO" id="GO:0042733">
    <property type="term" value="P:embryonic digit morphogenesis"/>
    <property type="evidence" value="ECO:0007669"/>
    <property type="project" value="Ensembl"/>
</dbReference>
<dbReference type="GO" id="GO:0071425">
    <property type="term" value="P:hematopoietic stem cell proliferation"/>
    <property type="evidence" value="ECO:0007669"/>
    <property type="project" value="Ensembl"/>
</dbReference>
<dbReference type="GO" id="GO:0008584">
    <property type="term" value="P:male gonad development"/>
    <property type="evidence" value="ECO:0007669"/>
    <property type="project" value="Ensembl"/>
</dbReference>
<dbReference type="GO" id="GO:0007501">
    <property type="term" value="P:mesodermal cell fate specification"/>
    <property type="evidence" value="ECO:0007669"/>
    <property type="project" value="Ensembl"/>
</dbReference>
<dbReference type="GO" id="GO:0030514">
    <property type="term" value="P:negative regulation of BMP signaling pathway"/>
    <property type="evidence" value="ECO:0007669"/>
    <property type="project" value="Ensembl"/>
</dbReference>
<dbReference type="GO" id="GO:0090090">
    <property type="term" value="P:negative regulation of canonical Wnt signaling pathway"/>
    <property type="evidence" value="ECO:0007669"/>
    <property type="project" value="Ensembl"/>
</dbReference>
<dbReference type="GO" id="GO:0010667">
    <property type="term" value="P:negative regulation of cardiac muscle cell apoptotic process"/>
    <property type="evidence" value="ECO:0007669"/>
    <property type="project" value="Ensembl"/>
</dbReference>
<dbReference type="GO" id="GO:0030308">
    <property type="term" value="P:negative regulation of cell growth"/>
    <property type="evidence" value="ECO:0007669"/>
    <property type="project" value="Ensembl"/>
</dbReference>
<dbReference type="GO" id="GO:0030336">
    <property type="term" value="P:negative regulation of cell migration"/>
    <property type="evidence" value="ECO:0007669"/>
    <property type="project" value="Ensembl"/>
</dbReference>
<dbReference type="GO" id="GO:0061185">
    <property type="term" value="P:negative regulation of dermatome development"/>
    <property type="evidence" value="ECO:0007669"/>
    <property type="project" value="Ensembl"/>
</dbReference>
<dbReference type="GO" id="GO:0045892">
    <property type="term" value="P:negative regulation of DNA-templated transcription"/>
    <property type="evidence" value="ECO:0007669"/>
    <property type="project" value="Ensembl"/>
</dbReference>
<dbReference type="GO" id="GO:0050680">
    <property type="term" value="P:negative regulation of epithelial cell proliferation"/>
    <property type="evidence" value="ECO:0007669"/>
    <property type="project" value="Ensembl"/>
</dbReference>
<dbReference type="GO" id="GO:0010719">
    <property type="term" value="P:negative regulation of epithelial to mesenchymal transition"/>
    <property type="evidence" value="ECO:0007669"/>
    <property type="project" value="Ensembl"/>
</dbReference>
<dbReference type="GO" id="GO:1902042">
    <property type="term" value="P:negative regulation of extrinsic apoptotic signaling pathway via death domain receptors"/>
    <property type="evidence" value="ECO:0007669"/>
    <property type="project" value="Ensembl"/>
</dbReference>
<dbReference type="GO" id="GO:0010629">
    <property type="term" value="P:negative regulation of gene expression"/>
    <property type="evidence" value="ECO:0007669"/>
    <property type="project" value="Ensembl"/>
</dbReference>
<dbReference type="GO" id="GO:1902230">
    <property type="term" value="P:negative regulation of intrinsic apoptotic signaling pathway in response to DNA damage"/>
    <property type="evidence" value="ECO:0000314"/>
    <property type="project" value="BHF-UCL"/>
</dbReference>
<dbReference type="GO" id="GO:0042662">
    <property type="term" value="P:negative regulation of mesodermal cell fate specification"/>
    <property type="evidence" value="ECO:0007669"/>
    <property type="project" value="Ensembl"/>
</dbReference>
<dbReference type="GO" id="GO:0001843">
    <property type="term" value="P:neural tube closure"/>
    <property type="evidence" value="ECO:0007669"/>
    <property type="project" value="Ensembl"/>
</dbReference>
<dbReference type="GO" id="GO:0035567">
    <property type="term" value="P:non-canonical Wnt signaling pathway"/>
    <property type="evidence" value="ECO:0000318"/>
    <property type="project" value="GO_Central"/>
</dbReference>
<dbReference type="GO" id="GO:0003151">
    <property type="term" value="P:outflow tract morphogenesis"/>
    <property type="evidence" value="ECO:0007669"/>
    <property type="project" value="Ensembl"/>
</dbReference>
<dbReference type="GO" id="GO:0045766">
    <property type="term" value="P:positive regulation of angiogenesis"/>
    <property type="evidence" value="ECO:0007669"/>
    <property type="project" value="Ensembl"/>
</dbReference>
<dbReference type="GO" id="GO:0043065">
    <property type="term" value="P:positive regulation of apoptotic process"/>
    <property type="evidence" value="ECO:0007669"/>
    <property type="project" value="Ensembl"/>
</dbReference>
<dbReference type="GO" id="GO:0090263">
    <property type="term" value="P:positive regulation of canonical Wnt signaling pathway"/>
    <property type="evidence" value="ECO:0007669"/>
    <property type="project" value="Ensembl"/>
</dbReference>
<dbReference type="GO" id="GO:0033630">
    <property type="term" value="P:positive regulation of cell adhesion mediated by integrin"/>
    <property type="evidence" value="ECO:0000314"/>
    <property type="project" value="BHF-UCL"/>
</dbReference>
<dbReference type="GO" id="GO:0030307">
    <property type="term" value="P:positive regulation of cell growth"/>
    <property type="evidence" value="ECO:0007669"/>
    <property type="project" value="Ensembl"/>
</dbReference>
<dbReference type="GO" id="GO:0008284">
    <property type="term" value="P:positive regulation of cell population proliferation"/>
    <property type="evidence" value="ECO:0007669"/>
    <property type="project" value="Ensembl"/>
</dbReference>
<dbReference type="GO" id="GO:0045600">
    <property type="term" value="P:positive regulation of fat cell differentiation"/>
    <property type="evidence" value="ECO:0007669"/>
    <property type="project" value="Ensembl"/>
</dbReference>
<dbReference type="GO" id="GO:0045669">
    <property type="term" value="P:positive regulation of osteoblast differentiation"/>
    <property type="evidence" value="ECO:0007669"/>
    <property type="project" value="Ensembl"/>
</dbReference>
<dbReference type="GO" id="GO:0045944">
    <property type="term" value="P:positive regulation of transcription by RNA polymerase II"/>
    <property type="evidence" value="ECO:0007669"/>
    <property type="project" value="Ensembl"/>
</dbReference>
<dbReference type="GO" id="GO:0036342">
    <property type="term" value="P:post-anal tail morphogenesis"/>
    <property type="evidence" value="ECO:0007669"/>
    <property type="project" value="Ensembl"/>
</dbReference>
<dbReference type="GO" id="GO:0090175">
    <property type="term" value="P:regulation of establishment of planar polarity"/>
    <property type="evidence" value="ECO:0007669"/>
    <property type="project" value="Ensembl"/>
</dbReference>
<dbReference type="GO" id="GO:1904956">
    <property type="term" value="P:regulation of midbrain dopaminergic neuron differentiation"/>
    <property type="evidence" value="ECO:0007669"/>
    <property type="project" value="Ensembl"/>
</dbReference>
<dbReference type="GO" id="GO:0010975">
    <property type="term" value="P:regulation of neuron projection development"/>
    <property type="evidence" value="ECO:0007669"/>
    <property type="project" value="Ensembl"/>
</dbReference>
<dbReference type="GO" id="GO:2000035">
    <property type="term" value="P:regulation of stem cell division"/>
    <property type="evidence" value="ECO:0007669"/>
    <property type="project" value="Ensembl"/>
</dbReference>
<dbReference type="GO" id="GO:0009410">
    <property type="term" value="P:response to xenobiotic stimulus"/>
    <property type="evidence" value="ECO:0007669"/>
    <property type="project" value="Ensembl"/>
</dbReference>
<dbReference type="GO" id="GO:0061056">
    <property type="term" value="P:sclerotome development"/>
    <property type="evidence" value="ECO:0007669"/>
    <property type="project" value="Ensembl"/>
</dbReference>
<dbReference type="GO" id="GO:0048866">
    <property type="term" value="P:stem cell fate specification"/>
    <property type="evidence" value="ECO:0007669"/>
    <property type="project" value="Ensembl"/>
</dbReference>
<dbReference type="GO" id="GO:0090244">
    <property type="term" value="P:Wnt signaling pathway involved in somitogenesis"/>
    <property type="evidence" value="ECO:0007669"/>
    <property type="project" value="Ensembl"/>
</dbReference>
<dbReference type="CDD" id="cd07446">
    <property type="entry name" value="CRD_SFRP2"/>
    <property type="match status" value="1"/>
</dbReference>
<dbReference type="CDD" id="cd03580">
    <property type="entry name" value="NTR_Sfrp1_like"/>
    <property type="match status" value="1"/>
</dbReference>
<dbReference type="FunFam" id="2.40.50.120:FF:000006">
    <property type="entry name" value="Secreted frizzled-related protein 2"/>
    <property type="match status" value="1"/>
</dbReference>
<dbReference type="FunFam" id="1.10.2000.10:FF:000001">
    <property type="entry name" value="secreted frizzled-related protein 2"/>
    <property type="match status" value="1"/>
</dbReference>
<dbReference type="Gene3D" id="2.40.50.120">
    <property type="match status" value="1"/>
</dbReference>
<dbReference type="Gene3D" id="1.10.2000.10">
    <property type="entry name" value="Frizzled cysteine-rich domain"/>
    <property type="match status" value="1"/>
</dbReference>
<dbReference type="InterPro" id="IPR015526">
    <property type="entry name" value="Frizzled/SFRP"/>
</dbReference>
<dbReference type="InterPro" id="IPR020067">
    <property type="entry name" value="Frizzled_dom"/>
</dbReference>
<dbReference type="InterPro" id="IPR036790">
    <property type="entry name" value="Frizzled_dom_sf"/>
</dbReference>
<dbReference type="InterPro" id="IPR001134">
    <property type="entry name" value="Netrin_domain"/>
</dbReference>
<dbReference type="InterPro" id="IPR018933">
    <property type="entry name" value="Netrin_module_non-TIMP"/>
</dbReference>
<dbReference type="InterPro" id="IPR041764">
    <property type="entry name" value="SFRP2_CRD"/>
</dbReference>
<dbReference type="InterPro" id="IPR008993">
    <property type="entry name" value="TIMP-like_OB-fold"/>
</dbReference>
<dbReference type="PANTHER" id="PTHR11309">
    <property type="entry name" value="FRIZZLED"/>
    <property type="match status" value="1"/>
</dbReference>
<dbReference type="PANTHER" id="PTHR11309:SF45">
    <property type="entry name" value="SECRETED FRIZZLED-RELATED PROTEIN 2"/>
    <property type="match status" value="1"/>
</dbReference>
<dbReference type="Pfam" id="PF01392">
    <property type="entry name" value="Fz"/>
    <property type="match status" value="1"/>
</dbReference>
<dbReference type="Pfam" id="PF01759">
    <property type="entry name" value="NTR"/>
    <property type="match status" value="1"/>
</dbReference>
<dbReference type="SMART" id="SM00643">
    <property type="entry name" value="C345C"/>
    <property type="match status" value="1"/>
</dbReference>
<dbReference type="SMART" id="SM00063">
    <property type="entry name" value="FRI"/>
    <property type="match status" value="1"/>
</dbReference>
<dbReference type="SUPFAM" id="SSF63501">
    <property type="entry name" value="Frizzled cysteine-rich domain"/>
    <property type="match status" value="1"/>
</dbReference>
<dbReference type="SUPFAM" id="SSF50242">
    <property type="entry name" value="TIMP-like"/>
    <property type="match status" value="1"/>
</dbReference>
<dbReference type="PROSITE" id="PS50038">
    <property type="entry name" value="FZ"/>
    <property type="match status" value="1"/>
</dbReference>
<dbReference type="PROSITE" id="PS50189">
    <property type="entry name" value="NTR"/>
    <property type="match status" value="1"/>
</dbReference>
<feature type="signal peptide" evidence="2">
    <location>
        <begin position="1"/>
        <end position="24"/>
    </location>
</feature>
<feature type="chain" id="PRO_0000032541" description="Secreted frizzled-related protein 2">
    <location>
        <begin position="25"/>
        <end position="294"/>
    </location>
</feature>
<feature type="domain" description="FZ" evidence="3">
    <location>
        <begin position="34"/>
        <end position="154"/>
    </location>
</feature>
<feature type="domain" description="NTR" evidence="4">
    <location>
        <begin position="171"/>
        <end position="294"/>
    </location>
</feature>
<feature type="disulfide bond" evidence="1">
    <location>
        <begin position="39"/>
        <end position="102"/>
    </location>
</feature>
<feature type="disulfide bond" evidence="1">
    <location>
        <begin position="49"/>
        <end position="95"/>
    </location>
</feature>
<feature type="disulfide bond" evidence="1">
    <location>
        <begin position="86"/>
        <end position="124"/>
    </location>
</feature>
<feature type="disulfide bond" evidence="1">
    <location>
        <begin position="113"/>
        <end position="151"/>
    </location>
</feature>
<feature type="disulfide bond" evidence="1">
    <location>
        <begin position="117"/>
        <end position="141"/>
    </location>
</feature>
<feature type="disulfide bond" evidence="1">
    <location>
        <begin position="171"/>
        <end position="244"/>
    </location>
</feature>
<feature type="disulfide bond" evidence="1">
    <location>
        <begin position="174"/>
        <end position="246"/>
    </location>
</feature>
<feature type="disulfide bond" evidence="1">
    <location>
        <begin position="189"/>
        <end position="294"/>
    </location>
</feature>
<proteinExistence type="evidence at transcript level"/>
<protein>
    <recommendedName>
        <fullName>Secreted frizzled-related protein 2</fullName>
        <shortName>sFRP-2</shortName>
    </recommendedName>
</protein>
<reference key="1">
    <citation type="journal article" date="2004" name="Breast Cancer Res. Treat.">
        <title>Secreted frizzled-related protein 2 (SFRP2) is highly expressed in canine mammary gland tumors but not in normal mammary glands.</title>
        <authorList>
            <person name="Lee J.L."/>
            <person name="Chang C.J."/>
            <person name="Wu S.Y."/>
            <person name="Sargan D.R."/>
            <person name="Lin C.T."/>
        </authorList>
    </citation>
    <scope>NUCLEOTIDE SEQUENCE [MRNA]</scope>
    <source>
        <strain>Irish setter</strain>
        <tissue>Retina</tissue>
    </source>
</reference>